<evidence type="ECO:0000255" key="1">
    <source>
        <dbReference type="HAMAP-Rule" id="MF_01152"/>
    </source>
</evidence>
<proteinExistence type="inferred from homology"/>
<sequence length="376" mass="41072">MAKRDYYEVLGISKSASADEIKKAYRKLSKQYHPDINKEAGADEKFKEISEAYEVLSDSQKRAQYDQYGHVDPNQGFGGGAGGGFSGGGFSGFEDIFDTFFGGGGRQQDPNAPRQGSDLQYTMRLKFKEAVFGKDAEIEIPREENCDTCHGSGAKPGTTPEKCSHCGGKGSINVEQNTPFGRVVNKRTCQYCNGTGKEIKEKCSTCHGKGRVTKTKKIKVKVPAGVNDGQQMRVSGEGEAGINGGPNGDLYVVFVVIPDEFFEREADDIYVEVPITFVQATLGDEIDVPTVHGKVRLKIPSGTQTGTTFRLRGKGVPHLRGNGTGDQHVIVKVIVPKKLDDKQKEILREFASTTGDRVDEQTSGFFDKMKRAFKGD</sequence>
<feature type="chain" id="PRO_1000085221" description="Chaperone protein DnaJ">
    <location>
        <begin position="1"/>
        <end position="376"/>
    </location>
</feature>
<feature type="domain" description="J" evidence="1">
    <location>
        <begin position="5"/>
        <end position="69"/>
    </location>
</feature>
<feature type="repeat" description="CXXCXGXG motif">
    <location>
        <begin position="146"/>
        <end position="153"/>
    </location>
</feature>
<feature type="repeat" description="CXXCXGXG motif">
    <location>
        <begin position="163"/>
        <end position="170"/>
    </location>
</feature>
<feature type="repeat" description="CXXCXGXG motif">
    <location>
        <begin position="189"/>
        <end position="196"/>
    </location>
</feature>
<feature type="repeat" description="CXXCXGXG motif">
    <location>
        <begin position="203"/>
        <end position="210"/>
    </location>
</feature>
<feature type="zinc finger region" description="CR-type" evidence="1">
    <location>
        <begin position="133"/>
        <end position="215"/>
    </location>
</feature>
<feature type="binding site" evidence="1">
    <location>
        <position position="146"/>
    </location>
    <ligand>
        <name>Zn(2+)</name>
        <dbReference type="ChEBI" id="CHEBI:29105"/>
        <label>1</label>
    </ligand>
</feature>
<feature type="binding site" evidence="1">
    <location>
        <position position="149"/>
    </location>
    <ligand>
        <name>Zn(2+)</name>
        <dbReference type="ChEBI" id="CHEBI:29105"/>
        <label>1</label>
    </ligand>
</feature>
<feature type="binding site" evidence="1">
    <location>
        <position position="163"/>
    </location>
    <ligand>
        <name>Zn(2+)</name>
        <dbReference type="ChEBI" id="CHEBI:29105"/>
        <label>2</label>
    </ligand>
</feature>
<feature type="binding site" evidence="1">
    <location>
        <position position="166"/>
    </location>
    <ligand>
        <name>Zn(2+)</name>
        <dbReference type="ChEBI" id="CHEBI:29105"/>
        <label>2</label>
    </ligand>
</feature>
<feature type="binding site" evidence="1">
    <location>
        <position position="189"/>
    </location>
    <ligand>
        <name>Zn(2+)</name>
        <dbReference type="ChEBI" id="CHEBI:29105"/>
        <label>2</label>
    </ligand>
</feature>
<feature type="binding site" evidence="1">
    <location>
        <position position="192"/>
    </location>
    <ligand>
        <name>Zn(2+)</name>
        <dbReference type="ChEBI" id="CHEBI:29105"/>
        <label>2</label>
    </ligand>
</feature>
<feature type="binding site" evidence="1">
    <location>
        <position position="203"/>
    </location>
    <ligand>
        <name>Zn(2+)</name>
        <dbReference type="ChEBI" id="CHEBI:29105"/>
        <label>1</label>
    </ligand>
</feature>
<feature type="binding site" evidence="1">
    <location>
        <position position="206"/>
    </location>
    <ligand>
        <name>Zn(2+)</name>
        <dbReference type="ChEBI" id="CHEBI:29105"/>
        <label>1</label>
    </ligand>
</feature>
<protein>
    <recommendedName>
        <fullName evidence="1">Chaperone protein DnaJ</fullName>
    </recommendedName>
</protein>
<name>DNAJ_LISW6</name>
<keyword id="KW-0143">Chaperone</keyword>
<keyword id="KW-0963">Cytoplasm</keyword>
<keyword id="KW-0235">DNA replication</keyword>
<keyword id="KW-0479">Metal-binding</keyword>
<keyword id="KW-0677">Repeat</keyword>
<keyword id="KW-0346">Stress response</keyword>
<keyword id="KW-0862">Zinc</keyword>
<keyword id="KW-0863">Zinc-finger</keyword>
<comment type="function">
    <text evidence="1">Participates actively in the response to hyperosmotic and heat shock by preventing the aggregation of stress-denatured proteins and by disaggregating proteins, also in an autonomous, DnaK-independent fashion. Unfolded proteins bind initially to DnaJ; upon interaction with the DnaJ-bound protein, DnaK hydrolyzes its bound ATP, resulting in the formation of a stable complex. GrpE releases ADP from DnaK; ATP binding to DnaK triggers the release of the substrate protein, thus completing the reaction cycle. Several rounds of ATP-dependent interactions between DnaJ, DnaK and GrpE are required for fully efficient folding. Also involved, together with DnaK and GrpE, in the DNA replication of plasmids through activation of initiation proteins.</text>
</comment>
<comment type="cofactor">
    <cofactor evidence="1">
        <name>Zn(2+)</name>
        <dbReference type="ChEBI" id="CHEBI:29105"/>
    </cofactor>
    <text evidence="1">Binds 2 Zn(2+) ions per monomer.</text>
</comment>
<comment type="subunit">
    <text evidence="1">Homodimer.</text>
</comment>
<comment type="subcellular location">
    <subcellularLocation>
        <location evidence="1">Cytoplasm</location>
    </subcellularLocation>
</comment>
<comment type="domain">
    <text evidence="1">The J domain is necessary and sufficient to stimulate DnaK ATPase activity. Zinc center 1 plays an important role in the autonomous, DnaK-independent chaperone activity of DnaJ. Zinc center 2 is essential for interaction with DnaK and for DnaJ activity.</text>
</comment>
<comment type="similarity">
    <text evidence="1">Belongs to the DnaJ family.</text>
</comment>
<gene>
    <name evidence="1" type="primary">dnaJ</name>
    <name type="ordered locus">lwe1487</name>
</gene>
<dbReference type="EMBL" id="AM263198">
    <property type="protein sequence ID" value="CAK20905.1"/>
    <property type="molecule type" value="Genomic_DNA"/>
</dbReference>
<dbReference type="RefSeq" id="WP_011702278.1">
    <property type="nucleotide sequence ID" value="NC_008555.1"/>
</dbReference>
<dbReference type="SMR" id="A0AIS3"/>
<dbReference type="STRING" id="386043.lwe1487"/>
<dbReference type="GeneID" id="61189363"/>
<dbReference type="KEGG" id="lwe:lwe1487"/>
<dbReference type="eggNOG" id="COG0484">
    <property type="taxonomic scope" value="Bacteria"/>
</dbReference>
<dbReference type="HOGENOM" id="CLU_017633_0_7_9"/>
<dbReference type="OrthoDB" id="9779889at2"/>
<dbReference type="Proteomes" id="UP000000779">
    <property type="component" value="Chromosome"/>
</dbReference>
<dbReference type="GO" id="GO:0005737">
    <property type="term" value="C:cytoplasm"/>
    <property type="evidence" value="ECO:0007669"/>
    <property type="project" value="UniProtKB-SubCell"/>
</dbReference>
<dbReference type="GO" id="GO:0005524">
    <property type="term" value="F:ATP binding"/>
    <property type="evidence" value="ECO:0007669"/>
    <property type="project" value="InterPro"/>
</dbReference>
<dbReference type="GO" id="GO:0031072">
    <property type="term" value="F:heat shock protein binding"/>
    <property type="evidence" value="ECO:0007669"/>
    <property type="project" value="InterPro"/>
</dbReference>
<dbReference type="GO" id="GO:0051082">
    <property type="term" value="F:unfolded protein binding"/>
    <property type="evidence" value="ECO:0007669"/>
    <property type="project" value="UniProtKB-UniRule"/>
</dbReference>
<dbReference type="GO" id="GO:0008270">
    <property type="term" value="F:zinc ion binding"/>
    <property type="evidence" value="ECO:0007669"/>
    <property type="project" value="UniProtKB-UniRule"/>
</dbReference>
<dbReference type="GO" id="GO:0051085">
    <property type="term" value="P:chaperone cofactor-dependent protein refolding"/>
    <property type="evidence" value="ECO:0007669"/>
    <property type="project" value="TreeGrafter"/>
</dbReference>
<dbReference type="GO" id="GO:0006260">
    <property type="term" value="P:DNA replication"/>
    <property type="evidence" value="ECO:0007669"/>
    <property type="project" value="UniProtKB-KW"/>
</dbReference>
<dbReference type="GO" id="GO:0042026">
    <property type="term" value="P:protein refolding"/>
    <property type="evidence" value="ECO:0007669"/>
    <property type="project" value="TreeGrafter"/>
</dbReference>
<dbReference type="GO" id="GO:0009408">
    <property type="term" value="P:response to heat"/>
    <property type="evidence" value="ECO:0007669"/>
    <property type="project" value="InterPro"/>
</dbReference>
<dbReference type="CDD" id="cd06257">
    <property type="entry name" value="DnaJ"/>
    <property type="match status" value="1"/>
</dbReference>
<dbReference type="CDD" id="cd10747">
    <property type="entry name" value="DnaJ_C"/>
    <property type="match status" value="1"/>
</dbReference>
<dbReference type="CDD" id="cd10719">
    <property type="entry name" value="DnaJ_zf"/>
    <property type="match status" value="1"/>
</dbReference>
<dbReference type="FunFam" id="1.10.287.110:FF:000031">
    <property type="entry name" value="Molecular chaperone DnaJ"/>
    <property type="match status" value="1"/>
</dbReference>
<dbReference type="FunFam" id="2.10.230.10:FF:000002">
    <property type="entry name" value="Molecular chaperone DnaJ"/>
    <property type="match status" value="1"/>
</dbReference>
<dbReference type="FunFam" id="2.60.260.20:FF:000004">
    <property type="entry name" value="Molecular chaperone DnaJ"/>
    <property type="match status" value="1"/>
</dbReference>
<dbReference type="FunFam" id="2.60.260.20:FF:000009">
    <property type="entry name" value="Putative Mitochondrial DnaJ chaperone"/>
    <property type="match status" value="1"/>
</dbReference>
<dbReference type="Gene3D" id="1.10.287.110">
    <property type="entry name" value="DnaJ domain"/>
    <property type="match status" value="1"/>
</dbReference>
<dbReference type="Gene3D" id="2.10.230.10">
    <property type="entry name" value="Heat shock protein DnaJ, cysteine-rich domain"/>
    <property type="match status" value="1"/>
</dbReference>
<dbReference type="Gene3D" id="2.60.260.20">
    <property type="entry name" value="Urease metallochaperone UreE, N-terminal domain"/>
    <property type="match status" value="2"/>
</dbReference>
<dbReference type="HAMAP" id="MF_01152">
    <property type="entry name" value="DnaJ"/>
    <property type="match status" value="1"/>
</dbReference>
<dbReference type="InterPro" id="IPR012724">
    <property type="entry name" value="DnaJ"/>
</dbReference>
<dbReference type="InterPro" id="IPR002939">
    <property type="entry name" value="DnaJ_C"/>
</dbReference>
<dbReference type="InterPro" id="IPR001623">
    <property type="entry name" value="DnaJ_domain"/>
</dbReference>
<dbReference type="InterPro" id="IPR018253">
    <property type="entry name" value="DnaJ_domain_CS"/>
</dbReference>
<dbReference type="InterPro" id="IPR008971">
    <property type="entry name" value="HSP40/DnaJ_pept-bd"/>
</dbReference>
<dbReference type="InterPro" id="IPR001305">
    <property type="entry name" value="HSP_DnaJ_Cys-rich_dom"/>
</dbReference>
<dbReference type="InterPro" id="IPR036410">
    <property type="entry name" value="HSP_DnaJ_Cys-rich_dom_sf"/>
</dbReference>
<dbReference type="InterPro" id="IPR036869">
    <property type="entry name" value="J_dom_sf"/>
</dbReference>
<dbReference type="NCBIfam" id="TIGR02349">
    <property type="entry name" value="DnaJ_bact"/>
    <property type="match status" value="1"/>
</dbReference>
<dbReference type="NCBIfam" id="NF008035">
    <property type="entry name" value="PRK10767.1"/>
    <property type="match status" value="1"/>
</dbReference>
<dbReference type="NCBIfam" id="NF010869">
    <property type="entry name" value="PRK14276.1"/>
    <property type="match status" value="1"/>
</dbReference>
<dbReference type="NCBIfam" id="NF010873">
    <property type="entry name" value="PRK14280.1"/>
    <property type="match status" value="1"/>
</dbReference>
<dbReference type="PANTHER" id="PTHR43096:SF48">
    <property type="entry name" value="CHAPERONE PROTEIN DNAJ"/>
    <property type="match status" value="1"/>
</dbReference>
<dbReference type="PANTHER" id="PTHR43096">
    <property type="entry name" value="DNAJ HOMOLOG 1, MITOCHONDRIAL-RELATED"/>
    <property type="match status" value="1"/>
</dbReference>
<dbReference type="Pfam" id="PF00226">
    <property type="entry name" value="DnaJ"/>
    <property type="match status" value="1"/>
</dbReference>
<dbReference type="Pfam" id="PF01556">
    <property type="entry name" value="DnaJ_C"/>
    <property type="match status" value="1"/>
</dbReference>
<dbReference type="Pfam" id="PF00684">
    <property type="entry name" value="DnaJ_CXXCXGXG"/>
    <property type="match status" value="1"/>
</dbReference>
<dbReference type="PRINTS" id="PR00625">
    <property type="entry name" value="JDOMAIN"/>
</dbReference>
<dbReference type="SMART" id="SM00271">
    <property type="entry name" value="DnaJ"/>
    <property type="match status" value="1"/>
</dbReference>
<dbReference type="SUPFAM" id="SSF46565">
    <property type="entry name" value="Chaperone J-domain"/>
    <property type="match status" value="1"/>
</dbReference>
<dbReference type="SUPFAM" id="SSF57938">
    <property type="entry name" value="DnaJ/Hsp40 cysteine-rich domain"/>
    <property type="match status" value="1"/>
</dbReference>
<dbReference type="SUPFAM" id="SSF49493">
    <property type="entry name" value="HSP40/DnaJ peptide-binding domain"/>
    <property type="match status" value="2"/>
</dbReference>
<dbReference type="PROSITE" id="PS00636">
    <property type="entry name" value="DNAJ_1"/>
    <property type="match status" value="1"/>
</dbReference>
<dbReference type="PROSITE" id="PS50076">
    <property type="entry name" value="DNAJ_2"/>
    <property type="match status" value="1"/>
</dbReference>
<dbReference type="PROSITE" id="PS51188">
    <property type="entry name" value="ZF_CR"/>
    <property type="match status" value="1"/>
</dbReference>
<reference key="1">
    <citation type="journal article" date="2006" name="J. Bacteriol.">
        <title>Whole-genome sequence of Listeria welshimeri reveals common steps in genome reduction with Listeria innocua as compared to Listeria monocytogenes.</title>
        <authorList>
            <person name="Hain T."/>
            <person name="Steinweg C."/>
            <person name="Kuenne C.T."/>
            <person name="Billion A."/>
            <person name="Ghai R."/>
            <person name="Chatterjee S.S."/>
            <person name="Domann E."/>
            <person name="Kaerst U."/>
            <person name="Goesmann A."/>
            <person name="Bekel T."/>
            <person name="Bartels D."/>
            <person name="Kaiser O."/>
            <person name="Meyer F."/>
            <person name="Puehler A."/>
            <person name="Weisshaar B."/>
            <person name="Wehland J."/>
            <person name="Liang C."/>
            <person name="Dandekar T."/>
            <person name="Lampidis R."/>
            <person name="Kreft J."/>
            <person name="Goebel W."/>
            <person name="Chakraborty T."/>
        </authorList>
    </citation>
    <scope>NUCLEOTIDE SEQUENCE [LARGE SCALE GENOMIC DNA]</scope>
    <source>
        <strain>ATCC 35897 / DSM 20650 / CCUG 15529 / CIP 8149 / NCTC 11857 / SLCC 5334 / V8</strain>
    </source>
</reference>
<accession>A0AIS3</accession>
<organism>
    <name type="scientific">Listeria welshimeri serovar 6b (strain ATCC 35897 / DSM 20650 / CCUG 15529 / CIP 8149 / NCTC 11857 / SLCC 5334 / V8)</name>
    <dbReference type="NCBI Taxonomy" id="386043"/>
    <lineage>
        <taxon>Bacteria</taxon>
        <taxon>Bacillati</taxon>
        <taxon>Bacillota</taxon>
        <taxon>Bacilli</taxon>
        <taxon>Bacillales</taxon>
        <taxon>Listeriaceae</taxon>
        <taxon>Listeria</taxon>
    </lineage>
</organism>